<comment type="function">
    <text evidence="1">Involved in the final reduction of the elongation cycle of fatty acid synthesis (FAS II). Catalyzes the reduction of a carbon-carbon double bond in an enoyl moiety that is covalently linked to an acyl carrier protein (ACP).</text>
</comment>
<comment type="catalytic activity">
    <reaction evidence="1">
        <text>a 2,3-saturated acyl-[ACP] + NAD(+) = a (2E)-enoyl-[ACP] + NADH + H(+)</text>
        <dbReference type="Rhea" id="RHEA:10240"/>
        <dbReference type="Rhea" id="RHEA-COMP:9925"/>
        <dbReference type="Rhea" id="RHEA-COMP:9926"/>
        <dbReference type="ChEBI" id="CHEBI:15378"/>
        <dbReference type="ChEBI" id="CHEBI:57540"/>
        <dbReference type="ChEBI" id="CHEBI:57945"/>
        <dbReference type="ChEBI" id="CHEBI:78784"/>
        <dbReference type="ChEBI" id="CHEBI:78785"/>
        <dbReference type="EC" id="1.3.1.9"/>
    </reaction>
</comment>
<comment type="pathway">
    <text evidence="1">Lipid metabolism; fatty acid biosynthesis.</text>
</comment>
<comment type="subunit">
    <text evidence="1">Monomer.</text>
</comment>
<comment type="similarity">
    <text evidence="1">Belongs to the TER reductase family.</text>
</comment>
<protein>
    <recommendedName>
        <fullName evidence="1">Enoyl-[acyl-carrier-protein] reductase [NADH]</fullName>
        <shortName evidence="1">ENR</shortName>
        <ecNumber evidence="1">1.3.1.9</ecNumber>
    </recommendedName>
</protein>
<sequence length="397" mass="42802">MIIKPRVRGFICVTTHPAGCAASVREQIAYVARRGPIERGPKKVLVIGASTGYGLAARIAAAFGVGAATLGVFFERAPADAKPGTAGWYNSAAFHDEAAARGLQATSVNGDAFSDEIKHKTIDAIRRDLGQVDLVVYSVAAPRRTHPKTGVTHQSTLKPIGHAVRLRGIDTDNEAIKETLLQPATPDEIADTVAVMGGEDWRMWIDALDAAGVLADGAKTTAFTYLGEQVTHDIYWNGSIGEAKKDLDRTVLALRGKLAARGGDARVSVLKAVVTQASSAIPMMPLYLSLLFKVMKARGTHEGCIEQVDGLLRDSLYSAQPHVDAEGRLRADRLELDPAVQARVLELWDQVTDDNLYTLTDFAGYKAEFLRLFGFGIDGVDYDAPVEPNVRIPNLIE</sequence>
<name>FABV_BURMS</name>
<reference key="1">
    <citation type="journal article" date="2010" name="Genome Biol. Evol.">
        <title>Continuing evolution of Burkholderia mallei through genome reduction and large-scale rearrangements.</title>
        <authorList>
            <person name="Losada L."/>
            <person name="Ronning C.M."/>
            <person name="DeShazer D."/>
            <person name="Woods D."/>
            <person name="Fedorova N."/>
            <person name="Kim H.S."/>
            <person name="Shabalina S.A."/>
            <person name="Pearson T.R."/>
            <person name="Brinkac L."/>
            <person name="Tan P."/>
            <person name="Nandi T."/>
            <person name="Crabtree J."/>
            <person name="Badger J."/>
            <person name="Beckstrom-Sternberg S."/>
            <person name="Saqib M."/>
            <person name="Schutzer S.E."/>
            <person name="Keim P."/>
            <person name="Nierman W.C."/>
        </authorList>
    </citation>
    <scope>NUCLEOTIDE SEQUENCE [LARGE SCALE GENOMIC DNA]</scope>
    <source>
        <strain>SAVP1</strain>
    </source>
</reference>
<dbReference type="EC" id="1.3.1.9" evidence="1"/>
<dbReference type="EMBL" id="CP000526">
    <property type="protein sequence ID" value="ABM51771.1"/>
    <property type="molecule type" value="Genomic_DNA"/>
</dbReference>
<dbReference type="RefSeq" id="WP_004192836.1">
    <property type="nucleotide sequence ID" value="NC_008785.1"/>
</dbReference>
<dbReference type="SMR" id="A1V3D9"/>
<dbReference type="GeneID" id="92978641"/>
<dbReference type="KEGG" id="bmv:BMASAVP1_A1410"/>
<dbReference type="HOGENOM" id="CLU_057698_1_0_4"/>
<dbReference type="UniPathway" id="UPA00094"/>
<dbReference type="GO" id="GO:0004318">
    <property type="term" value="F:enoyl-[acyl-carrier-protein] reductase (NADH) activity"/>
    <property type="evidence" value="ECO:0007669"/>
    <property type="project" value="UniProtKB-UniRule"/>
</dbReference>
<dbReference type="GO" id="GO:0051287">
    <property type="term" value="F:NAD binding"/>
    <property type="evidence" value="ECO:0007669"/>
    <property type="project" value="UniProtKB-UniRule"/>
</dbReference>
<dbReference type="GO" id="GO:0050343">
    <property type="term" value="F:trans-2-enoyl-CoA reductase (NADH) activity"/>
    <property type="evidence" value="ECO:0007669"/>
    <property type="project" value="TreeGrafter"/>
</dbReference>
<dbReference type="GO" id="GO:0006633">
    <property type="term" value="P:fatty acid biosynthetic process"/>
    <property type="evidence" value="ECO:0007669"/>
    <property type="project" value="UniProtKB-UniRule"/>
</dbReference>
<dbReference type="FunFam" id="3.40.50.720:FF:000221">
    <property type="entry name" value="Enoyl-[acyl-carrier-protein] reductase [NADH]"/>
    <property type="match status" value="1"/>
</dbReference>
<dbReference type="Gene3D" id="3.40.50.720">
    <property type="entry name" value="NAD(P)-binding Rossmann-like Domain"/>
    <property type="match status" value="1"/>
</dbReference>
<dbReference type="HAMAP" id="MF_01838">
    <property type="entry name" value="FabV_reductase"/>
    <property type="match status" value="1"/>
</dbReference>
<dbReference type="InterPro" id="IPR024906">
    <property type="entry name" value="Eno_Rdtase_FAD-bd_dom"/>
</dbReference>
<dbReference type="InterPro" id="IPR024910">
    <property type="entry name" value="Enoyl-CoA_Rdtase_cat_dom"/>
</dbReference>
<dbReference type="InterPro" id="IPR050048">
    <property type="entry name" value="FabV-like_NADH_b"/>
</dbReference>
<dbReference type="InterPro" id="IPR010758">
    <property type="entry name" value="Trans-2-enoyl-CoA_reductase"/>
</dbReference>
<dbReference type="NCBIfam" id="NF043048">
    <property type="entry name" value="EnoyACPredFabV"/>
    <property type="match status" value="1"/>
</dbReference>
<dbReference type="NCBIfam" id="NF010177">
    <property type="entry name" value="PRK13656.1"/>
    <property type="match status" value="1"/>
</dbReference>
<dbReference type="PANTHER" id="PTHR37480">
    <property type="entry name" value="ENOYL-[ACYL-CARRIER-PROTEIN] REDUCTASE [NADH]"/>
    <property type="match status" value="1"/>
</dbReference>
<dbReference type="PANTHER" id="PTHR37480:SF1">
    <property type="entry name" value="ENOYL-[ACYL-CARRIER-PROTEIN] REDUCTASE [NADH]"/>
    <property type="match status" value="1"/>
</dbReference>
<dbReference type="Pfam" id="PF07055">
    <property type="entry name" value="Eno-Rase_FAD_bd"/>
    <property type="match status" value="1"/>
</dbReference>
<dbReference type="Pfam" id="PF12242">
    <property type="entry name" value="Eno-Rase_NADH_b"/>
    <property type="match status" value="1"/>
</dbReference>
<dbReference type="Pfam" id="PF12241">
    <property type="entry name" value="Enoyl_reductase"/>
    <property type="match status" value="1"/>
</dbReference>
<gene>
    <name evidence="1" type="primary">fabV</name>
    <name type="ordered locus">BMASAVP1_A1410</name>
</gene>
<accession>A1V3D9</accession>
<evidence type="ECO:0000255" key="1">
    <source>
        <dbReference type="HAMAP-Rule" id="MF_01838"/>
    </source>
</evidence>
<feature type="chain" id="PRO_1000070471" description="Enoyl-[acyl-carrier-protein] reductase [NADH]">
    <location>
        <begin position="1"/>
        <end position="397"/>
    </location>
</feature>
<feature type="active site" description="Proton donor" evidence="1">
    <location>
        <position position="235"/>
    </location>
</feature>
<feature type="binding site" evidence="1">
    <location>
        <begin position="48"/>
        <end position="53"/>
    </location>
    <ligand>
        <name>NAD(+)</name>
        <dbReference type="ChEBI" id="CHEBI:57540"/>
    </ligand>
</feature>
<feature type="binding site" evidence="1">
    <location>
        <begin position="74"/>
        <end position="75"/>
    </location>
    <ligand>
        <name>NAD(+)</name>
        <dbReference type="ChEBI" id="CHEBI:57540"/>
    </ligand>
</feature>
<feature type="binding site" evidence="1">
    <location>
        <begin position="111"/>
        <end position="112"/>
    </location>
    <ligand>
        <name>NAD(+)</name>
        <dbReference type="ChEBI" id="CHEBI:57540"/>
    </ligand>
</feature>
<feature type="binding site" evidence="1">
    <location>
        <begin position="139"/>
        <end position="140"/>
    </location>
    <ligand>
        <name>NAD(+)</name>
        <dbReference type="ChEBI" id="CHEBI:57540"/>
    </ligand>
</feature>
<feature type="binding site" evidence="1">
    <location>
        <position position="225"/>
    </location>
    <ligand>
        <name>substrate</name>
    </ligand>
</feature>
<feature type="binding site" evidence="1">
    <location>
        <position position="244"/>
    </location>
    <ligand>
        <name>NAD(+)</name>
        <dbReference type="ChEBI" id="CHEBI:57540"/>
    </ligand>
</feature>
<feature type="binding site" evidence="1">
    <location>
        <begin position="273"/>
        <end position="275"/>
    </location>
    <ligand>
        <name>NAD(+)</name>
        <dbReference type="ChEBI" id="CHEBI:57540"/>
    </ligand>
</feature>
<feature type="site" description="Plays an important role in discriminating NADH against NADPH" evidence="1">
    <location>
        <position position="75"/>
    </location>
</feature>
<keyword id="KW-0275">Fatty acid biosynthesis</keyword>
<keyword id="KW-0276">Fatty acid metabolism</keyword>
<keyword id="KW-0444">Lipid biosynthesis</keyword>
<keyword id="KW-0443">Lipid metabolism</keyword>
<keyword id="KW-0520">NAD</keyword>
<keyword id="KW-0560">Oxidoreductase</keyword>
<proteinExistence type="inferred from homology"/>
<organism>
    <name type="scientific">Burkholderia mallei (strain SAVP1)</name>
    <dbReference type="NCBI Taxonomy" id="320388"/>
    <lineage>
        <taxon>Bacteria</taxon>
        <taxon>Pseudomonadati</taxon>
        <taxon>Pseudomonadota</taxon>
        <taxon>Betaproteobacteria</taxon>
        <taxon>Burkholderiales</taxon>
        <taxon>Burkholderiaceae</taxon>
        <taxon>Burkholderia</taxon>
        <taxon>pseudomallei group</taxon>
    </lineage>
</organism>